<sequence>MYRLGSQGRSIQSQLQNGDSSSGRPLQLQGTGMREAQRIPQQLDYLLAEIISPNEDTNVIGYLAYYYPKLKNEQNVALLTDFFLRCPTYFSHSNVVSLRNNYPVMEAFNYIMTTKFKVSQPTVPFYRFYAAVLASLLNCEKTDPSHHWKLIPILTGVLLSIKGRDDVELYPDHSRSIKGSDTAVAQLLQRCLLRFYQSGDARSYDLNALVIISMSCALDYVEDDTIKKILYCFNYTRAIIDLIYYSPYGLNDSDIPLLSDSSVNSQSFDQLLNNNPALKHLNRLSFLFERTVKLNDGSIQSNLNDIDISLNKMQSFSEKLSKKISVLDDDSSKGVGQLLRQCLYASIIIHQAILTTFFQLDNADYTKYFLPSFSRKILSILFNLFFIVDRIGTGGFQPYNFVYLTCLQGIIQYDMKTAESLVKTFTTGINYSSLKDSEVARAKLLFTLNLMEQIVNICSDDLRLELIVPLVEDLVNNKNACVDIHNHVFKSIFESAHSVILKFFTVVDSSVKNVDYETNVTLVSEKIIPYLTLVIDQFPEFLSINQLDIAIETISRTVFPDSPIYSYDKNISSMFLNVLFNKCLTVDNDELVELPAIEAVVAPKNDEENNTSDAQDGGPKELQSLNDLKSRRSALISALISVFPLIPVKDYTKWLSIAFYDLIVATPERTERAFLQERLWDCVVGTNKYDPQKGNLGIMWWYENVNAQSTAKL</sequence>
<protein>
    <recommendedName>
        <fullName evidence="7">Peroxisomal biogenesis factor 8</fullName>
    </recommendedName>
    <alternativeName>
        <fullName evidence="7">Peroxin-8</fullName>
    </alternativeName>
    <alternativeName>
        <fullName evidence="8">Peroxisomal protein PER3</fullName>
    </alternativeName>
</protein>
<proteinExistence type="evidence at protein level"/>
<name>PEX8_KOMPG</name>
<accession>C4QY68</accession>
<keyword id="KW-0472">Membrane</keyword>
<keyword id="KW-0576">Peroxisome</keyword>
<keyword id="KW-1185">Reference proteome</keyword>
<evidence type="ECO:0000255" key="1"/>
<evidence type="ECO:0000256" key="2">
    <source>
        <dbReference type="SAM" id="MobiDB-lite"/>
    </source>
</evidence>
<evidence type="ECO:0000269" key="3">
    <source>
    </source>
</evidence>
<evidence type="ECO:0000269" key="4">
    <source>
    </source>
</evidence>
<evidence type="ECO:0000269" key="5">
    <source>
    </source>
</evidence>
<evidence type="ECO:0000269" key="6">
    <source>
    </source>
</evidence>
<evidence type="ECO:0000303" key="7">
    <source>
    </source>
</evidence>
<evidence type="ECO:0000303" key="8">
    <source>
    </source>
</evidence>
<evidence type="ECO:0000305" key="9"/>
<reference key="1">
    <citation type="journal article" date="2009" name="Nat. Biotechnol.">
        <title>Genome sequence of the recombinant protein production host Pichia pastoris.</title>
        <authorList>
            <person name="De Schutter K."/>
            <person name="Lin Y.-C."/>
            <person name="Tiels P."/>
            <person name="Van Hecke A."/>
            <person name="Glinka S."/>
            <person name="Weber-Lehmann J."/>
            <person name="Rouze P."/>
            <person name="Van de Peer Y."/>
            <person name="Callewaert N."/>
        </authorList>
    </citation>
    <scope>NUCLEOTIDE SEQUENCE [LARGE SCALE GENOMIC DNA]</scope>
    <source>
        <strain>GS115 / ATCC 20864</strain>
    </source>
</reference>
<reference key="2">
    <citation type="journal article" date="1995" name="J. Biol. Chem.">
        <title>PER3, a gene required for peroxisome biogenesis in Pichia pastoris, encodes a peroxisomal membrane protein involved in protein import.</title>
        <authorList>
            <person name="Liu H."/>
            <person name="Tan X."/>
            <person name="Russell K.A."/>
            <person name="Veenhuis M."/>
            <person name="Cregg J.M."/>
        </authorList>
    </citation>
    <scope>FUNCTION</scope>
    <scope>DISRUPTION PHENOTYPE</scope>
    <scope>SUBCELLULAR LOCATION</scope>
</reference>
<reference key="3">
    <citation type="journal article" date="2006" name="Mol. Cell. Biol.">
        <title>Mxr1p, a key regulator of the methanol utilization pathway and peroxisomal genes in Pichia pastoris.</title>
        <authorList>
            <person name="Lin-Cereghino G.P."/>
            <person name="Godfrey L."/>
            <person name="de la Cruz B.J."/>
            <person name="Johnson S."/>
            <person name="Khuongsathiene S."/>
            <person name="Tolstorukov I."/>
            <person name="Yan M."/>
            <person name="Lin-Cereghino J."/>
            <person name="Veenhuis M."/>
            <person name="Subramani S."/>
            <person name="Cregg J.M."/>
        </authorList>
    </citation>
    <scope>INDUCTION</scope>
</reference>
<reference key="4">
    <citation type="journal article" date="2010" name="Yeast">
        <title>Identification of Mxr1p-binding sites in the promoters of genes encoding dihydroxyacetone synthase and peroxin 8 of the methylotrophic yeast Pichia pastoris.</title>
        <authorList>
            <person name="Kranthi B.V."/>
            <person name="Kumar H.R."/>
            <person name="Rangarajan P.N."/>
        </authorList>
    </citation>
    <scope>INDUCTION</scope>
</reference>
<reference key="5">
    <citation type="journal article" date="2013" name="J. Biol. Chem.">
        <title>Redox-regulated cargo binding and release by the peroxisomal targeting signal receptor, Pex5.</title>
        <authorList>
            <person name="Ma C."/>
            <person name="Hagstrom D."/>
            <person name="Polley S.G."/>
            <person name="Subramani S."/>
        </authorList>
    </citation>
    <scope>FUNCTION</scope>
    <scope>INTERACTION WITH PEX5</scope>
</reference>
<feature type="chain" id="PRO_0000461166" description="Peroxisomal biogenesis factor 8">
    <location>
        <begin position="1"/>
        <end position="713"/>
    </location>
</feature>
<feature type="region of interest" description="Disordered" evidence="2">
    <location>
        <begin position="1"/>
        <end position="31"/>
    </location>
</feature>
<feature type="short sequence motif" description="Microbody targeting signal" evidence="1">
    <location>
        <begin position="711"/>
        <end position="713"/>
    </location>
</feature>
<feature type="compositionally biased region" description="Polar residues" evidence="2">
    <location>
        <begin position="7"/>
        <end position="30"/>
    </location>
</feature>
<dbReference type="EMBL" id="FN392319">
    <property type="protein sequence ID" value="CAY68191.1"/>
    <property type="molecule type" value="Genomic_DNA"/>
</dbReference>
<dbReference type="RefSeq" id="XP_002490472.1">
    <property type="nucleotide sequence ID" value="XM_002490427.1"/>
</dbReference>
<dbReference type="SMR" id="C4QY68"/>
<dbReference type="FunCoup" id="C4QY68">
    <property type="interactions" value="49"/>
</dbReference>
<dbReference type="STRING" id="644223.C4QY68"/>
<dbReference type="EnsemblFungi" id="CAY68191">
    <property type="protein sequence ID" value="CAY68191"/>
    <property type="gene ID" value="PAS_chr1-4_0349"/>
</dbReference>
<dbReference type="GeneID" id="8197797"/>
<dbReference type="KEGG" id="ppa:PAS_chr1-4_0349"/>
<dbReference type="eggNOG" id="ENOG502S88F">
    <property type="taxonomic scope" value="Eukaryota"/>
</dbReference>
<dbReference type="HOGENOM" id="CLU_441495_0_0_1"/>
<dbReference type="InParanoid" id="C4QY68"/>
<dbReference type="OMA" id="YNFVYYL"/>
<dbReference type="OrthoDB" id="2357318at2759"/>
<dbReference type="Proteomes" id="UP000000314">
    <property type="component" value="Chromosome 1"/>
</dbReference>
<dbReference type="GO" id="GO:0005778">
    <property type="term" value="C:peroxisomal membrane"/>
    <property type="evidence" value="ECO:0007669"/>
    <property type="project" value="UniProtKB-SubCell"/>
</dbReference>
<dbReference type="InterPro" id="IPR055334">
    <property type="entry name" value="PEX8-like"/>
</dbReference>
<dbReference type="PANTHER" id="PTHR39214">
    <property type="entry name" value="MICROBODY (PEROXISOME) BIOGENESIS PROTEIN PEROXIN 8 (EUROFUNG)"/>
    <property type="match status" value="1"/>
</dbReference>
<dbReference type="PANTHER" id="PTHR39214:SF1">
    <property type="entry name" value="MICROBODY (PEROXISOME) BIOGENESIS PROTEIN PEROXIN 8 (EUROFUNG)"/>
    <property type="match status" value="1"/>
</dbReference>
<comment type="function">
    <text evidence="5 6">Essential component of the machinery required for the import of both PTS1 and PTS2 (and perhaps all) peroxisomal matrix proteins (PubMed:7738036). Binding of PEX8 to the N-terminus of PEX5 cargo receptor induces a conformational change of the TPR domains and decrease their binding affinity to cargo, facilitating the release of the PTS1 proteins within the peroxisome (PubMed:23902771).</text>
</comment>
<comment type="subunit">
    <text evidence="5">Interacts with PEX5 (via N-terminus).</text>
</comment>
<comment type="subcellular location">
    <subcellularLocation>
        <location evidence="6">Peroxisome membrane</location>
        <topology evidence="9">Peripheral membrane protein</topology>
    </subcellularLocation>
</comment>
<comment type="induction">
    <text evidence="3 4">Induced in presence of methanol by the transcription factor MRX1 that binds the 5'-CYCC-3' consensus sequence within the PEX8 promoter.</text>
</comment>
<comment type="disruption phenotype">
    <text evidence="6">Leads to a peroxisomal-deficient phenotype with the absence of peroxisomes and the accumulation of aberrant peroxisomal structures resembling 'membranous ghosts'.</text>
</comment>
<organism>
    <name type="scientific">Komagataella phaffii (strain GS115 / ATCC 20864)</name>
    <name type="common">Yeast</name>
    <name type="synonym">Pichia pastoris</name>
    <dbReference type="NCBI Taxonomy" id="644223"/>
    <lineage>
        <taxon>Eukaryota</taxon>
        <taxon>Fungi</taxon>
        <taxon>Dikarya</taxon>
        <taxon>Ascomycota</taxon>
        <taxon>Saccharomycotina</taxon>
        <taxon>Pichiomycetes</taxon>
        <taxon>Pichiales</taxon>
        <taxon>Pichiaceae</taxon>
        <taxon>Komagataella</taxon>
    </lineage>
</organism>
<gene>
    <name evidence="7" type="primary">PEX8</name>
    <name evidence="8" type="synonym">PER3</name>
    <name type="ordered locus">PAS_chr1-4_0349</name>
</gene>